<keyword id="KW-0002">3D-structure</keyword>
<keyword id="KW-1015">Disulfide bond</keyword>
<keyword id="KW-0378">Hydrolase</keyword>
<keyword id="KW-0904">Protein phosphatase</keyword>
<keyword id="KW-1185">Reference proteome</keyword>
<comment type="function">
    <text evidence="4 5">Mediates dephosphorylation of MAPK substrates such as SLT2, acquiring enhanced catalytic activity under oxidative conditions.</text>
</comment>
<comment type="catalytic activity">
    <reaction evidence="2">
        <text>O-phospho-L-tyrosyl-[protein] + H2O = L-tyrosyl-[protein] + phosphate</text>
        <dbReference type="Rhea" id="RHEA:10684"/>
        <dbReference type="Rhea" id="RHEA-COMP:10136"/>
        <dbReference type="Rhea" id="RHEA-COMP:20101"/>
        <dbReference type="ChEBI" id="CHEBI:15377"/>
        <dbReference type="ChEBI" id="CHEBI:43474"/>
        <dbReference type="ChEBI" id="CHEBI:46858"/>
        <dbReference type="ChEBI" id="CHEBI:61978"/>
        <dbReference type="EC" id="3.1.3.48"/>
    </reaction>
</comment>
<comment type="similarity">
    <text evidence="6">Belongs to the protein-tyrosine phosphatase family. Non-receptor class dual specificity subfamily.</text>
</comment>
<dbReference type="EC" id="3.1.3.48"/>
<dbReference type="EMBL" id="Z38125">
    <property type="protein sequence ID" value="CAA86267.1"/>
    <property type="molecule type" value="Genomic_DNA"/>
</dbReference>
<dbReference type="EMBL" id="BK006942">
    <property type="protein sequence ID" value="DAA08440.1"/>
    <property type="molecule type" value="Genomic_DNA"/>
</dbReference>
<dbReference type="PIR" id="S48459">
    <property type="entry name" value="S48459"/>
</dbReference>
<dbReference type="RefSeq" id="NP_012153.1">
    <property type="nucleotide sequence ID" value="NM_001179461.1"/>
</dbReference>
<dbReference type="PDB" id="2J16">
    <property type="method" value="X-ray"/>
    <property type="resolution" value="2.70 A"/>
    <property type="chains" value="A/B=17-198"/>
</dbReference>
<dbReference type="PDB" id="2J17">
    <property type="method" value="X-ray"/>
    <property type="resolution" value="2.84 A"/>
    <property type="chains" value="A/B=17-198"/>
</dbReference>
<dbReference type="PDBsum" id="2J16"/>
<dbReference type="PDBsum" id="2J17"/>
<dbReference type="SMR" id="P40479"/>
<dbReference type="BioGRID" id="34878">
    <property type="interactions" value="74"/>
</dbReference>
<dbReference type="DIP" id="DIP-1899N"/>
<dbReference type="FunCoup" id="P40479">
    <property type="interactions" value="680"/>
</dbReference>
<dbReference type="IntAct" id="P40479">
    <property type="interactions" value="9"/>
</dbReference>
<dbReference type="MINT" id="P40479"/>
<dbReference type="STRING" id="4932.YIL113W"/>
<dbReference type="iPTMnet" id="P40479"/>
<dbReference type="PaxDb" id="4932-YIL113W"/>
<dbReference type="PeptideAtlas" id="P40479"/>
<dbReference type="EnsemblFungi" id="YIL113W_mRNA">
    <property type="protein sequence ID" value="YIL113W"/>
    <property type="gene ID" value="YIL113W"/>
</dbReference>
<dbReference type="GeneID" id="854693"/>
<dbReference type="KEGG" id="sce:YIL113W"/>
<dbReference type="AGR" id="SGD:S000001375"/>
<dbReference type="SGD" id="S000001375">
    <property type="gene designation" value="SDP1"/>
</dbReference>
<dbReference type="VEuPathDB" id="FungiDB:YIL113W"/>
<dbReference type="eggNOG" id="KOG1716">
    <property type="taxonomic scope" value="Eukaryota"/>
</dbReference>
<dbReference type="GeneTree" id="ENSGT00940000175236"/>
<dbReference type="HOGENOM" id="CLU_1316327_0_0_1"/>
<dbReference type="InParanoid" id="P40479"/>
<dbReference type="OMA" id="VKHESPW"/>
<dbReference type="OrthoDB" id="426001at2759"/>
<dbReference type="BioCyc" id="YEAST:G3O-31367-MONOMER"/>
<dbReference type="BioGRID-ORCS" id="854693">
    <property type="hits" value="8 hits in 10 CRISPR screens"/>
</dbReference>
<dbReference type="EvolutionaryTrace" id="P40479"/>
<dbReference type="PRO" id="PR:P40479"/>
<dbReference type="Proteomes" id="UP000002311">
    <property type="component" value="Chromosome IX"/>
</dbReference>
<dbReference type="RNAct" id="P40479">
    <property type="molecule type" value="protein"/>
</dbReference>
<dbReference type="GO" id="GO:0005737">
    <property type="term" value="C:cytoplasm"/>
    <property type="evidence" value="ECO:0000314"/>
    <property type="project" value="SGD"/>
</dbReference>
<dbReference type="GO" id="GO:0005634">
    <property type="term" value="C:nucleus"/>
    <property type="evidence" value="ECO:0000314"/>
    <property type="project" value="SGD"/>
</dbReference>
<dbReference type="GO" id="GO:0033550">
    <property type="term" value="F:MAP kinase tyrosine phosphatase activity"/>
    <property type="evidence" value="ECO:0000314"/>
    <property type="project" value="SGD"/>
</dbReference>
<dbReference type="GO" id="GO:0017017">
    <property type="term" value="F:MAP kinase tyrosine/serine/threonine phosphatase activity"/>
    <property type="evidence" value="ECO:0000314"/>
    <property type="project" value="SGD"/>
</dbReference>
<dbReference type="GO" id="GO:0008330">
    <property type="term" value="F:protein tyrosine/threonine phosphatase activity"/>
    <property type="evidence" value="ECO:0000318"/>
    <property type="project" value="GO_Central"/>
</dbReference>
<dbReference type="GO" id="GO:0000196">
    <property type="term" value="P:cell integrity MAPK cascade"/>
    <property type="evidence" value="ECO:0000316"/>
    <property type="project" value="SGD"/>
</dbReference>
<dbReference type="GO" id="GO:0043409">
    <property type="term" value="P:negative regulation of MAPK cascade"/>
    <property type="evidence" value="ECO:0000318"/>
    <property type="project" value="GO_Central"/>
</dbReference>
<dbReference type="GO" id="GO:0007165">
    <property type="term" value="P:signal transduction"/>
    <property type="evidence" value="ECO:0000318"/>
    <property type="project" value="GO_Central"/>
</dbReference>
<dbReference type="CDD" id="cd14521">
    <property type="entry name" value="DSP_fungal_SDP1-like"/>
    <property type="match status" value="1"/>
</dbReference>
<dbReference type="FunFam" id="3.90.190.10:FF:000094">
    <property type="entry name" value="Probable tyrosine-protein phosphatase"/>
    <property type="match status" value="1"/>
</dbReference>
<dbReference type="Gene3D" id="3.90.190.10">
    <property type="entry name" value="Protein tyrosine phosphatase superfamily"/>
    <property type="match status" value="1"/>
</dbReference>
<dbReference type="InterPro" id="IPR000340">
    <property type="entry name" value="Dual-sp_phosphatase_cat-dom"/>
</dbReference>
<dbReference type="InterPro" id="IPR029021">
    <property type="entry name" value="Prot-tyrosine_phosphatase-like"/>
</dbReference>
<dbReference type="InterPro" id="IPR016130">
    <property type="entry name" value="Tyr_Pase_AS"/>
</dbReference>
<dbReference type="InterPro" id="IPR000387">
    <property type="entry name" value="Tyr_Pase_dom"/>
</dbReference>
<dbReference type="InterPro" id="IPR020422">
    <property type="entry name" value="TYR_PHOSPHATASE_DUAL_dom"/>
</dbReference>
<dbReference type="PANTHER" id="PTHR10159">
    <property type="entry name" value="DUAL SPECIFICITY PROTEIN PHOSPHATASE"/>
    <property type="match status" value="1"/>
</dbReference>
<dbReference type="PANTHER" id="PTHR10159:SF519">
    <property type="entry name" value="DUAL SPECIFICITY PROTEIN PHOSPHATASE MPK3"/>
    <property type="match status" value="1"/>
</dbReference>
<dbReference type="Pfam" id="PF00782">
    <property type="entry name" value="DSPc"/>
    <property type="match status" value="1"/>
</dbReference>
<dbReference type="SMART" id="SM00195">
    <property type="entry name" value="DSPc"/>
    <property type="match status" value="1"/>
</dbReference>
<dbReference type="SUPFAM" id="SSF52799">
    <property type="entry name" value="(Phosphotyrosine protein) phosphatases II"/>
    <property type="match status" value="1"/>
</dbReference>
<dbReference type="PROSITE" id="PS00383">
    <property type="entry name" value="TYR_PHOSPHATASE_1"/>
    <property type="match status" value="1"/>
</dbReference>
<dbReference type="PROSITE" id="PS50056">
    <property type="entry name" value="TYR_PHOSPHATASE_2"/>
    <property type="match status" value="1"/>
</dbReference>
<dbReference type="PROSITE" id="PS50054">
    <property type="entry name" value="TYR_PHOSPHATASE_DUAL"/>
    <property type="match status" value="1"/>
</dbReference>
<protein>
    <recommendedName>
        <fullName>Dual-specificity protein phosphatase SDP1</fullName>
        <ecNumber>3.1.3.48</ecNumber>
    </recommendedName>
    <alternativeName>
        <fullName>Stress-inducible MAPK phosphatase</fullName>
    </alternativeName>
</protein>
<gene>
    <name type="primary">SDP1</name>
    <name type="ordered locus">YIL113W</name>
</gene>
<organism>
    <name type="scientific">Saccharomyces cerevisiae (strain ATCC 204508 / S288c)</name>
    <name type="common">Baker's yeast</name>
    <dbReference type="NCBI Taxonomy" id="559292"/>
    <lineage>
        <taxon>Eukaryota</taxon>
        <taxon>Fungi</taxon>
        <taxon>Dikarya</taxon>
        <taxon>Ascomycota</taxon>
        <taxon>Saccharomycotina</taxon>
        <taxon>Saccharomycetes</taxon>
        <taxon>Saccharomycetales</taxon>
        <taxon>Saccharomycetaceae</taxon>
        <taxon>Saccharomyces</taxon>
    </lineage>
</organism>
<accession>P40479</accession>
<accession>D6VVH4</accession>
<evidence type="ECO:0000255" key="1">
    <source>
        <dbReference type="PROSITE-ProRule" id="PRU00160"/>
    </source>
</evidence>
<evidence type="ECO:0000255" key="2">
    <source>
        <dbReference type="PROSITE-ProRule" id="PRU10044"/>
    </source>
</evidence>
<evidence type="ECO:0000256" key="3">
    <source>
        <dbReference type="SAM" id="MobiDB-lite"/>
    </source>
</evidence>
<evidence type="ECO:0000269" key="4">
    <source>
    </source>
</evidence>
<evidence type="ECO:0000269" key="5">
    <source>
    </source>
</evidence>
<evidence type="ECO:0000305" key="6"/>
<evidence type="ECO:0007829" key="7">
    <source>
        <dbReference type="PDB" id="2J16"/>
    </source>
</evidence>
<name>SDP1_YEAST</name>
<sequence>MNIYTSPTRTPNIAPKSGQRPSLPMLATDERSTDKESPNEDREFVPCSSLDVRRIYPKGPLLVLPEKIYLYSEPTVKELLPFDVVINVAEEANDLRMQVPAVEYHHYRWEHDSQIALDLPSLTSIIHAATTKREKILIHCQCGLSRSATLIIAYIMKYHNLSLRHSYDLLKSRADKINPSIGLIFQLMEWEVALNAKTNVQANSYRKVP</sequence>
<feature type="chain" id="PRO_0000094924" description="Dual-specificity protein phosphatase SDP1">
    <location>
        <begin position="1"/>
        <end position="209"/>
    </location>
</feature>
<feature type="domain" description="Tyrosine-protein phosphatase" evidence="1">
    <location>
        <begin position="59"/>
        <end position="196"/>
    </location>
</feature>
<feature type="region of interest" description="Disordered" evidence="3">
    <location>
        <begin position="1"/>
        <end position="43"/>
    </location>
</feature>
<feature type="compositionally biased region" description="Polar residues" evidence="3">
    <location>
        <begin position="1"/>
        <end position="11"/>
    </location>
</feature>
<feature type="compositionally biased region" description="Basic and acidic residues" evidence="3">
    <location>
        <begin position="28"/>
        <end position="43"/>
    </location>
</feature>
<feature type="active site" description="Phosphocysteine intermediate" evidence="1">
    <location>
        <position position="140"/>
    </location>
</feature>
<feature type="binding site">
    <location>
        <position position="111"/>
    </location>
    <ligand>
        <name>4-O-phospho-L-tyrosine</name>
        <dbReference type="ChEBI" id="CHEBI:62338"/>
    </ligand>
</feature>
<feature type="disulfide bond" evidence="5">
    <location>
        <begin position="47"/>
        <end position="142"/>
    </location>
</feature>
<feature type="strand" evidence="7">
    <location>
        <begin position="58"/>
        <end position="64"/>
    </location>
</feature>
<feature type="turn" evidence="7">
    <location>
        <begin position="65"/>
        <end position="67"/>
    </location>
</feature>
<feature type="strand" evidence="7">
    <location>
        <begin position="68"/>
        <end position="73"/>
    </location>
</feature>
<feature type="turn" evidence="7">
    <location>
        <begin position="76"/>
        <end position="81"/>
    </location>
</feature>
<feature type="strand" evidence="7">
    <location>
        <begin position="83"/>
        <end position="87"/>
    </location>
</feature>
<feature type="helix" evidence="7">
    <location>
        <begin position="96"/>
        <end position="98"/>
    </location>
</feature>
<feature type="strand" evidence="7">
    <location>
        <begin position="103"/>
        <end position="106"/>
    </location>
</feature>
<feature type="helix" evidence="7">
    <location>
        <begin position="112"/>
        <end position="118"/>
    </location>
</feature>
<feature type="helix" evidence="7">
    <location>
        <begin position="119"/>
        <end position="131"/>
    </location>
</feature>
<feature type="strand" evidence="7">
    <location>
        <begin position="136"/>
        <end position="142"/>
    </location>
</feature>
<feature type="helix" evidence="7">
    <location>
        <begin position="146"/>
        <end position="158"/>
    </location>
</feature>
<feature type="helix" evidence="7">
    <location>
        <begin position="163"/>
        <end position="173"/>
    </location>
</feature>
<feature type="helix" evidence="7">
    <location>
        <begin position="181"/>
        <end position="195"/>
    </location>
</feature>
<proteinExistence type="evidence at protein level"/>
<reference key="1">
    <citation type="journal article" date="1997" name="Nature">
        <title>The nucleotide sequence of Saccharomyces cerevisiae chromosome IX.</title>
        <authorList>
            <person name="Churcher C.M."/>
            <person name="Bowman S."/>
            <person name="Badcock K."/>
            <person name="Bankier A.T."/>
            <person name="Brown D."/>
            <person name="Chillingworth T."/>
            <person name="Connor R."/>
            <person name="Devlin K."/>
            <person name="Gentles S."/>
            <person name="Hamlin N."/>
            <person name="Harris D.E."/>
            <person name="Horsnell T."/>
            <person name="Hunt S."/>
            <person name="Jagels K."/>
            <person name="Jones M."/>
            <person name="Lye G."/>
            <person name="Moule S."/>
            <person name="Odell C."/>
            <person name="Pearson D."/>
            <person name="Rajandream M.A."/>
            <person name="Rice P."/>
            <person name="Rowley N."/>
            <person name="Skelton J."/>
            <person name="Smith V."/>
            <person name="Walsh S.V."/>
            <person name="Whitehead S."/>
            <person name="Barrell B.G."/>
        </authorList>
    </citation>
    <scope>NUCLEOTIDE SEQUENCE [LARGE SCALE GENOMIC DNA]</scope>
    <source>
        <strain>ATCC 204508 / S288c</strain>
    </source>
</reference>
<reference key="2">
    <citation type="journal article" date="2014" name="G3 (Bethesda)">
        <title>The reference genome sequence of Saccharomyces cerevisiae: Then and now.</title>
        <authorList>
            <person name="Engel S.R."/>
            <person name="Dietrich F.S."/>
            <person name="Fisk D.G."/>
            <person name="Binkley G."/>
            <person name="Balakrishnan R."/>
            <person name="Costanzo M.C."/>
            <person name="Dwight S.S."/>
            <person name="Hitz B.C."/>
            <person name="Karra K."/>
            <person name="Nash R.S."/>
            <person name="Weng S."/>
            <person name="Wong E.D."/>
            <person name="Lloyd P."/>
            <person name="Skrzypek M.S."/>
            <person name="Miyasato S.R."/>
            <person name="Simison M."/>
            <person name="Cherry J.M."/>
        </authorList>
    </citation>
    <scope>GENOME REANNOTATION</scope>
    <source>
        <strain>ATCC 204508 / S288c</strain>
    </source>
</reference>
<reference key="3">
    <citation type="journal article" date="2002" name="FEBS Lett.">
        <title>YIL113w encodes a functional dual-specificity protein phosphatase which specifically interacts with and inactivates the Slt2/Mpk1p MAP kinase in S. cerevisiae.</title>
        <authorList>
            <person name="Collister M."/>
            <person name="Didmon M.P."/>
            <person name="MacIsaac F."/>
            <person name="Stark M.J."/>
            <person name="MacDonald N.Q."/>
            <person name="Keyse S.M."/>
        </authorList>
    </citation>
    <scope>FUNCTION</scope>
</reference>
<reference key="4">
    <citation type="journal article" date="2007" name="J. Proteome Res.">
        <title>Large-scale phosphorylation analysis of alpha-factor-arrested Saccharomyces cerevisiae.</title>
        <authorList>
            <person name="Li X."/>
            <person name="Gerber S.A."/>
            <person name="Rudner A.D."/>
            <person name="Beausoleil S.A."/>
            <person name="Haas W."/>
            <person name="Villen J."/>
            <person name="Elias J.E."/>
            <person name="Gygi S.P."/>
        </authorList>
    </citation>
    <scope>IDENTIFICATION BY MASS SPECTROMETRY [LARGE SCALE ANALYSIS]</scope>
    <source>
        <strain>ADR376</strain>
    </source>
</reference>
<reference key="5">
    <citation type="journal article" date="2007" name="Nature">
        <title>Redox-mediated substrate recognition by Sdp1 defines a new group of tyrosine phosphatases.</title>
        <authorList>
            <person name="Fox G.C."/>
            <person name="Shafiq M."/>
            <person name="Briggs D.C."/>
            <person name="Knowles P.P."/>
            <person name="Collister M."/>
            <person name="Didmon M.J."/>
            <person name="Makrantoni V."/>
            <person name="Dickinson R.J."/>
            <person name="Hanrahan S."/>
            <person name="Totty N."/>
            <person name="Stark M.J."/>
            <person name="Keyse S.M."/>
            <person name="McDonald N.Q."/>
        </authorList>
    </citation>
    <scope>X-RAY CRYSTALLOGRAPHY (2.7 ANGSTROMS) OF 17-198 OF WILD TYPE AND MUTANT SER-142</scope>
    <scope>FUNCTION</scope>
    <scope>DISULFIDE BOND</scope>
</reference>